<feature type="chain" id="PRO_0000281195" description="Probable ABC transporter permease protein BRA0749/BS1330_II0742">
    <location>
        <begin position="1"/>
        <end position="289"/>
    </location>
</feature>
<feature type="transmembrane region" description="Helical" evidence="1">
    <location>
        <begin position="9"/>
        <end position="29"/>
    </location>
</feature>
<feature type="transmembrane region" description="Helical" evidence="1">
    <location>
        <begin position="70"/>
        <end position="90"/>
    </location>
</feature>
<feature type="transmembrane region" description="Helical" evidence="1">
    <location>
        <begin position="99"/>
        <end position="119"/>
    </location>
</feature>
<feature type="transmembrane region" description="Helical" evidence="1">
    <location>
        <begin position="144"/>
        <end position="166"/>
    </location>
</feature>
<feature type="transmembrane region" description="Helical" evidence="1">
    <location>
        <begin position="213"/>
        <end position="233"/>
    </location>
</feature>
<feature type="transmembrane region" description="Helical" evidence="1">
    <location>
        <begin position="260"/>
        <end position="280"/>
    </location>
</feature>
<feature type="domain" description="ABC transmembrane type-1" evidence="1">
    <location>
        <begin position="65"/>
        <end position="279"/>
    </location>
</feature>
<dbReference type="EMBL" id="AE014292">
    <property type="protein sequence ID" value="AAN33931.1"/>
    <property type="molecule type" value="Genomic_DNA"/>
</dbReference>
<dbReference type="EMBL" id="CP002998">
    <property type="protein sequence ID" value="AEM20207.1"/>
    <property type="molecule type" value="Genomic_DNA"/>
</dbReference>
<dbReference type="RefSeq" id="WP_004687185.1">
    <property type="nucleotide sequence ID" value="NZ_KN046805.1"/>
</dbReference>
<dbReference type="SMR" id="Q8FVS6"/>
<dbReference type="KEGG" id="bms:BRA0749"/>
<dbReference type="KEGG" id="bsi:BS1330_II0742"/>
<dbReference type="PATRIC" id="fig|204722.21.peg.1335"/>
<dbReference type="HOGENOM" id="CLU_016047_0_3_5"/>
<dbReference type="PhylomeDB" id="Q8FVS6"/>
<dbReference type="Proteomes" id="UP000007104">
    <property type="component" value="Chromosome II"/>
</dbReference>
<dbReference type="GO" id="GO:0005886">
    <property type="term" value="C:plasma membrane"/>
    <property type="evidence" value="ECO:0007669"/>
    <property type="project" value="UniProtKB-SubCell"/>
</dbReference>
<dbReference type="GO" id="GO:0055085">
    <property type="term" value="P:transmembrane transport"/>
    <property type="evidence" value="ECO:0007669"/>
    <property type="project" value="InterPro"/>
</dbReference>
<dbReference type="CDD" id="cd06261">
    <property type="entry name" value="TM_PBP2"/>
    <property type="match status" value="1"/>
</dbReference>
<dbReference type="Gene3D" id="1.10.3720.10">
    <property type="entry name" value="MetI-like"/>
    <property type="match status" value="1"/>
</dbReference>
<dbReference type="InterPro" id="IPR000515">
    <property type="entry name" value="MetI-like"/>
</dbReference>
<dbReference type="InterPro" id="IPR035906">
    <property type="entry name" value="MetI-like_sf"/>
</dbReference>
<dbReference type="PANTHER" id="PTHR43005">
    <property type="entry name" value="BLR7065 PROTEIN"/>
    <property type="match status" value="1"/>
</dbReference>
<dbReference type="PANTHER" id="PTHR43005:SF1">
    <property type="entry name" value="SPERMIDINE_PUTRESCINE TRANSPORT SYSTEM PERMEASE PROTEIN"/>
    <property type="match status" value="1"/>
</dbReference>
<dbReference type="Pfam" id="PF00528">
    <property type="entry name" value="BPD_transp_1"/>
    <property type="match status" value="1"/>
</dbReference>
<dbReference type="SUPFAM" id="SSF161098">
    <property type="entry name" value="MetI-like"/>
    <property type="match status" value="1"/>
</dbReference>
<dbReference type="PROSITE" id="PS50928">
    <property type="entry name" value="ABC_TM1"/>
    <property type="match status" value="1"/>
</dbReference>
<name>Y3749_BRUSU</name>
<proteinExistence type="inferred from homology"/>
<keyword id="KW-0997">Cell inner membrane</keyword>
<keyword id="KW-1003">Cell membrane</keyword>
<keyword id="KW-0472">Membrane</keyword>
<keyword id="KW-0812">Transmembrane</keyword>
<keyword id="KW-1133">Transmembrane helix</keyword>
<keyword id="KW-0813">Transport</keyword>
<reference key="1">
    <citation type="journal article" date="2002" name="Proc. Natl. Acad. Sci. U.S.A.">
        <title>The Brucella suis genome reveals fundamental similarities between animal and plant pathogens and symbionts.</title>
        <authorList>
            <person name="Paulsen I.T."/>
            <person name="Seshadri R."/>
            <person name="Nelson K.E."/>
            <person name="Eisen J.A."/>
            <person name="Heidelberg J.F."/>
            <person name="Read T.D."/>
            <person name="Dodson R.J."/>
            <person name="Umayam L.A."/>
            <person name="Brinkac L.M."/>
            <person name="Beanan M.J."/>
            <person name="Daugherty S.C."/>
            <person name="DeBoy R.T."/>
            <person name="Durkin A.S."/>
            <person name="Kolonay J.F."/>
            <person name="Madupu R."/>
            <person name="Nelson W.C."/>
            <person name="Ayodeji B."/>
            <person name="Kraul M."/>
            <person name="Shetty J."/>
            <person name="Malek J.A."/>
            <person name="Van Aken S.E."/>
            <person name="Riedmuller S."/>
            <person name="Tettelin H."/>
            <person name="Gill S.R."/>
            <person name="White O."/>
            <person name="Salzberg S.L."/>
            <person name="Hoover D.L."/>
            <person name="Lindler L.E."/>
            <person name="Halling S.M."/>
            <person name="Boyle S.M."/>
            <person name="Fraser C.M."/>
        </authorList>
    </citation>
    <scope>NUCLEOTIDE SEQUENCE [LARGE SCALE GENOMIC DNA]</scope>
    <source>
        <strain>1330</strain>
    </source>
</reference>
<reference key="2">
    <citation type="journal article" date="2011" name="J. Bacteriol.">
        <title>Revised genome sequence of Brucella suis 1330.</title>
        <authorList>
            <person name="Tae H."/>
            <person name="Shallom S."/>
            <person name="Settlage R."/>
            <person name="Preston D."/>
            <person name="Adams L.G."/>
            <person name="Garner H.R."/>
        </authorList>
    </citation>
    <scope>NUCLEOTIDE SEQUENCE [LARGE SCALE GENOMIC DNA]</scope>
    <source>
        <strain>1330</strain>
    </source>
</reference>
<protein>
    <recommendedName>
        <fullName>Probable ABC transporter permease protein BRA0749/BS1330_II0742</fullName>
    </recommendedName>
</protein>
<gene>
    <name type="ordered locus">BRA0749</name>
    <name type="ordered locus">BS1330_II0742</name>
</gene>
<organism>
    <name type="scientific">Brucella suis biovar 1 (strain 1330)</name>
    <dbReference type="NCBI Taxonomy" id="204722"/>
    <lineage>
        <taxon>Bacteria</taxon>
        <taxon>Pseudomonadati</taxon>
        <taxon>Pseudomonadota</taxon>
        <taxon>Alphaproteobacteria</taxon>
        <taxon>Hyphomicrobiales</taxon>
        <taxon>Brucellaceae</taxon>
        <taxon>Brucella/Ochrobactrum group</taxon>
        <taxon>Brucella</taxon>
    </lineage>
</organism>
<accession>Q8FVS6</accession>
<accession>G0KDB9</accession>
<comment type="function">
    <text evidence="2">Probably part of an ABC transporter complex. Probably responsible for the translocation of the substrate across the membrane (Probable).</text>
</comment>
<comment type="subunit">
    <text evidence="2">The complex is composed of two ATP-binding proteins (BRA0745), two transmembrane proteins (BRA0749) and a solute-binding protein (BRA0748).</text>
</comment>
<comment type="subcellular location">
    <subcellularLocation>
        <location evidence="2">Cell inner membrane</location>
        <topology evidence="1">Multi-pass membrane protein</topology>
    </subcellularLocation>
</comment>
<comment type="similarity">
    <text evidence="2">Belongs to the binding-protein-dependent transport system permease family.</text>
</comment>
<sequence>MQNRTLPYFLILPSLLLAAVVIFWPVVHLFEIATHDVNRFGQLREFNDGANFTALFATAEFMNALWRTAVWTVAVVGGALVLSIPVAIILNMDFYGRSVARVIIMLPWAVSLTMTAIVWRWALNGESGMLNSALHGLGLIDTNIQWLASAATAFPMQILVGILVTVPFTTTIFLGGLSSIPDDLYEASSLEGASLWQQFREITFPLLKPFVNIAIVLNTIYVFNSFPIIWVMTQGGPANSTDILVTHLYKLAFRLGKLGEASAVSLIMLAILLVFTVIYIRISTRSEQS</sequence>
<evidence type="ECO:0000255" key="1">
    <source>
        <dbReference type="PROSITE-ProRule" id="PRU00441"/>
    </source>
</evidence>
<evidence type="ECO:0000305" key="2"/>